<sequence length="206" mass="23315">MAEDADMRNELEEMQRRADQLADESLESTRRMLQLVEESKDAGIRTLVMLDEQGEQLERIEEGMDQINKDMKEAEKNLTDLGKFCGLCVCPCNKLKSSDAYKKAWGNNQDGVVASQPARVVDEREQMAISGGFIRRVTNDARENEMDENLEQVSGIIGNLRHMALDMGNEIDTQNRQIDRIMEKADSNKTRIDEANQRATKMLGSG</sequence>
<proteinExistence type="evidence at transcript level"/>
<reference key="1">
    <citation type="submission" date="2004-08" db="EMBL/GenBank/DDBJ databases">
        <authorList>
            <person name="Hirai M."/>
            <person name="Sakate R."/>
            <person name="Hida M."/>
            <person name="Sugano S."/>
            <person name="Hayasaka I."/>
            <person name="Suto Y."/>
            <person name="Osada N."/>
            <person name="Hashimoto K."/>
        </authorList>
    </citation>
    <scope>NUCLEOTIDE SEQUENCE [MRNA]</scope>
    <source>
        <tissue>Cerebellum</tissue>
    </source>
</reference>
<feature type="chain" id="PRO_0000213590" description="Synaptosomal-associated protein 25">
    <location>
        <begin position="1"/>
        <end position="206"/>
    </location>
</feature>
<feature type="domain" description="t-SNARE coiled-coil homology 1" evidence="6">
    <location>
        <begin position="19"/>
        <end position="81"/>
    </location>
</feature>
<feature type="domain" description="t-SNARE coiled-coil homology 2" evidence="6">
    <location>
        <begin position="140"/>
        <end position="202"/>
    </location>
</feature>
<feature type="region of interest" description="Interaction with CENPF" evidence="1">
    <location>
        <begin position="1"/>
        <end position="75"/>
    </location>
</feature>
<feature type="region of interest" description="Disordered" evidence="7">
    <location>
        <begin position="1"/>
        <end position="23"/>
    </location>
</feature>
<feature type="region of interest" description="Interaction with ZDHHC17" evidence="3">
    <location>
        <begin position="111"/>
        <end position="120"/>
    </location>
</feature>
<feature type="compositionally biased region" description="Basic and acidic residues" evidence="7">
    <location>
        <begin position="1"/>
        <end position="20"/>
    </location>
</feature>
<feature type="modified residue" description="Phosphothreonine" evidence="2">
    <location>
        <position position="138"/>
    </location>
</feature>
<feature type="modified residue" description="Phosphoserine" evidence="2">
    <location>
        <position position="154"/>
    </location>
</feature>
<feature type="modified residue" description="Phosphoserine" evidence="2">
    <location>
        <position position="187"/>
    </location>
</feature>
<feature type="lipid moiety-binding region" description="S-palmitoyl cysteine" evidence="2">
    <location>
        <position position="85"/>
    </location>
</feature>
<feature type="lipid moiety-binding region" description="S-palmitoyl cysteine" evidence="2">
    <location>
        <position position="88"/>
    </location>
</feature>
<feature type="lipid moiety-binding region" description="S-palmitoyl cysteine" evidence="2">
    <location>
        <position position="90"/>
    </location>
</feature>
<feature type="lipid moiety-binding region" description="S-palmitoyl cysteine" evidence="2">
    <location>
        <position position="92"/>
    </location>
</feature>
<comment type="function">
    <text evidence="1 4">t-SNARE involved in the molecular regulation of neurotransmitter release. May play an important role in the synaptic function of specific neuronal systems. Associates with proteins involved in vesicle docking and membrane fusion. Regulates plasma membrane recycling through its interaction with CENPF. Modulates the gating characteristics of the delayed rectifier voltage-dependent potassium channel KCNB1 in pancreatic beta cells.</text>
</comment>
<comment type="subunit">
    <text evidence="2 4 5">Part of the SNARE core complex containing SNAP25, VAMP2 and STX1A; this complex constitutes the basic catalytic machinery of the complex neurotransmitter release apparatus (By similarity). Recruited to the SNARE complex following binding of the SNARE complex component STX1A to STXBP1 (By similarity). This complex binds CPLX1. Found in a complex containing SYT1, SV2B and syntaxin-1. Found in a ternary complex with STX1A and VAMP8 (By similarity). Interacts with HSC70 and with SYT9, forming a complex with DNAJC5 (By similarity). The interaction with SYT9 is inhibited in presence of calcium (By similarity). Isoform 1 and isoform 2 interact with BLOC1S6. Interacts with CENPF. Interacts with EQTN. Interacts with HGS. Interacts with KCNB1 (via N-terminus); reduces the voltage-dependent potassium channel KCNB1 activity in pancreatic beta cells. Interacts with OTOF. Interacts with RIMS1. Interacts with SNAPIN. Interacts with STXBP6. Interacts with TRIM9. Interacts with ZDHHC13 (via ANK repeats). Interacts with ZDHHC17 (via ANK repeats). Associates with the BLOC-1 complex (By similarity). Interacts with PLCL1 (via C2 domain) (By similarity). Interacts with PRRT2; this interaction may impair the formation of the SNARE complex (By similarity). Interacts with alpha-synuclein/SNCA (By similarity). Interacts with PRPH2 (By similarity). Interacts with ROM1 (By similarity). Interacts with STX3 (By similarity).</text>
</comment>
<comment type="subcellular location">
    <subcellularLocation>
        <location evidence="2">Cytoplasm</location>
        <location evidence="2">Perinuclear region</location>
    </subcellularLocation>
    <subcellularLocation>
        <location evidence="4">Cell membrane</location>
        <topology evidence="2">Lipid-anchor</topology>
    </subcellularLocation>
    <subcellularLocation>
        <location evidence="2">Synapse</location>
        <location evidence="2">Synaptosome</location>
    </subcellularLocation>
    <subcellularLocation>
        <location evidence="2">Photoreceptor inner segment</location>
    </subcellularLocation>
    <text evidence="2 4">Membrane association requires palmitoylation. Expressed throughout cytoplasm, concentrating at the perinuclear region. Colocalizes with KCNB1 at the cell membrane (By similarity). Colocalizes with PLCL1 at the cell membrane (By similarity).</text>
</comment>
<comment type="PTM">
    <text evidence="2">Palmitoylated. Cys-85 appears to be the main site, and palmitoylation is required for membrane association (By similarity).</text>
</comment>
<comment type="similarity">
    <text evidence="8">Belongs to the SNAP-25 family.</text>
</comment>
<dbReference type="EMBL" id="AB188276">
    <property type="protein sequence ID" value="BAD74027.1"/>
    <property type="molecule type" value="mRNA"/>
</dbReference>
<dbReference type="RefSeq" id="NP_001009094.1">
    <property type="nucleotide sequence ID" value="NM_001009094.1"/>
</dbReference>
<dbReference type="RefSeq" id="XP_009434909.1">
    <property type="nucleotide sequence ID" value="XM_009436634.2"/>
</dbReference>
<dbReference type="RefSeq" id="XP_063658477.1">
    <property type="nucleotide sequence ID" value="XM_063802407.1"/>
</dbReference>
<dbReference type="SMR" id="Q5R1X1"/>
<dbReference type="FunCoup" id="Q5R1X1">
    <property type="interactions" value="992"/>
</dbReference>
<dbReference type="STRING" id="9598.ENSPTRP00000022723"/>
<dbReference type="PaxDb" id="9598-ENSPTRP00000022723"/>
<dbReference type="Ensembl" id="ENSPTRT00000024629.2">
    <property type="protein sequence ID" value="ENSPTRP00000022723.1"/>
    <property type="gene ID" value="ENSPTRG00000013246.6"/>
</dbReference>
<dbReference type="GeneID" id="458096"/>
<dbReference type="CTD" id="6616"/>
<dbReference type="VGNC" id="VGNC:6263">
    <property type="gene designation" value="SNAP25"/>
</dbReference>
<dbReference type="eggNOG" id="KOG3065">
    <property type="taxonomic scope" value="Eukaryota"/>
</dbReference>
<dbReference type="GeneTree" id="ENSGT00950000182843"/>
<dbReference type="HOGENOM" id="CLU_096939_0_0_1"/>
<dbReference type="InParanoid" id="Q5R1X1"/>
<dbReference type="OMA" id="GMIQINE"/>
<dbReference type="TreeFam" id="TF315125"/>
<dbReference type="Proteomes" id="UP000002277">
    <property type="component" value="Chromosome 20"/>
</dbReference>
<dbReference type="Bgee" id="ENSPTRG00000013246">
    <property type="expression patterns" value="Expressed in Brodmann (1909) area 10 and 14 other cell types or tissues"/>
</dbReference>
<dbReference type="GO" id="GO:0030424">
    <property type="term" value="C:axon"/>
    <property type="evidence" value="ECO:0007669"/>
    <property type="project" value="Ensembl"/>
</dbReference>
<dbReference type="GO" id="GO:0031083">
    <property type="term" value="C:BLOC-1 complex"/>
    <property type="evidence" value="ECO:0007669"/>
    <property type="project" value="Ensembl"/>
</dbReference>
<dbReference type="GO" id="GO:0005938">
    <property type="term" value="C:cell cortex"/>
    <property type="evidence" value="ECO:0007669"/>
    <property type="project" value="Ensembl"/>
</dbReference>
<dbReference type="GO" id="GO:0005737">
    <property type="term" value="C:cytoplasm"/>
    <property type="evidence" value="ECO:0000250"/>
    <property type="project" value="UniProtKB"/>
</dbReference>
<dbReference type="GO" id="GO:0005856">
    <property type="term" value="C:cytoskeleton"/>
    <property type="evidence" value="ECO:0007669"/>
    <property type="project" value="Ensembl"/>
</dbReference>
<dbReference type="GO" id="GO:0098978">
    <property type="term" value="C:glutamatergic synapse"/>
    <property type="evidence" value="ECO:0007669"/>
    <property type="project" value="Ensembl"/>
</dbReference>
<dbReference type="GO" id="GO:0016020">
    <property type="term" value="C:membrane"/>
    <property type="evidence" value="ECO:0000250"/>
    <property type="project" value="UniProtKB"/>
</dbReference>
<dbReference type="GO" id="GO:0048471">
    <property type="term" value="C:perinuclear region of cytoplasm"/>
    <property type="evidence" value="ECO:0007669"/>
    <property type="project" value="UniProtKB-SubCell"/>
</dbReference>
<dbReference type="GO" id="GO:0001917">
    <property type="term" value="C:photoreceptor inner segment"/>
    <property type="evidence" value="ECO:0007669"/>
    <property type="project" value="UniProtKB-SubCell"/>
</dbReference>
<dbReference type="GO" id="GO:0005886">
    <property type="term" value="C:plasma membrane"/>
    <property type="evidence" value="ECO:0000318"/>
    <property type="project" value="GO_Central"/>
</dbReference>
<dbReference type="GO" id="GO:0042734">
    <property type="term" value="C:presynaptic membrane"/>
    <property type="evidence" value="ECO:0007669"/>
    <property type="project" value="Ensembl"/>
</dbReference>
<dbReference type="GO" id="GO:0097470">
    <property type="term" value="C:ribbon synapse"/>
    <property type="evidence" value="ECO:0007669"/>
    <property type="project" value="Ensembl"/>
</dbReference>
<dbReference type="GO" id="GO:0031201">
    <property type="term" value="C:SNARE complex"/>
    <property type="evidence" value="ECO:0000250"/>
    <property type="project" value="UniProtKB"/>
</dbReference>
<dbReference type="GO" id="GO:0036477">
    <property type="term" value="C:somatodendritic compartment"/>
    <property type="evidence" value="ECO:0007669"/>
    <property type="project" value="Ensembl"/>
</dbReference>
<dbReference type="GO" id="GO:0008021">
    <property type="term" value="C:synaptic vesicle"/>
    <property type="evidence" value="ECO:0007669"/>
    <property type="project" value="Ensembl"/>
</dbReference>
<dbReference type="GO" id="GO:0070032">
    <property type="term" value="C:synaptobrevin 2-SNAP-25-syntaxin-1a-complexin I complex"/>
    <property type="evidence" value="ECO:0000318"/>
    <property type="project" value="GO_Central"/>
</dbReference>
<dbReference type="GO" id="GO:0005802">
    <property type="term" value="C:trans-Golgi network"/>
    <property type="evidence" value="ECO:0007669"/>
    <property type="project" value="Ensembl"/>
</dbReference>
<dbReference type="GO" id="GO:0005484">
    <property type="term" value="F:SNAP receptor activity"/>
    <property type="evidence" value="ECO:0000318"/>
    <property type="project" value="GO_Central"/>
</dbReference>
<dbReference type="GO" id="GO:0017075">
    <property type="term" value="F:syntaxin-1 binding"/>
    <property type="evidence" value="ECO:0000318"/>
    <property type="project" value="GO_Central"/>
</dbReference>
<dbReference type="GO" id="GO:0005249">
    <property type="term" value="F:voltage-gated potassium channel activity"/>
    <property type="evidence" value="ECO:0007669"/>
    <property type="project" value="InterPro"/>
</dbReference>
<dbReference type="GO" id="GO:0008306">
    <property type="term" value="P:associative learning"/>
    <property type="evidence" value="ECO:0007669"/>
    <property type="project" value="Ensembl"/>
</dbReference>
<dbReference type="GO" id="GO:0006887">
    <property type="term" value="P:exocytosis"/>
    <property type="evidence" value="ECO:0000318"/>
    <property type="project" value="GO_Central"/>
</dbReference>
<dbReference type="GO" id="GO:0007626">
    <property type="term" value="P:locomotory behavior"/>
    <property type="evidence" value="ECO:0007669"/>
    <property type="project" value="Ensembl"/>
</dbReference>
<dbReference type="GO" id="GO:0060291">
    <property type="term" value="P:long-term synaptic potentiation"/>
    <property type="evidence" value="ECO:0007669"/>
    <property type="project" value="Ensembl"/>
</dbReference>
<dbReference type="GO" id="GO:0099525">
    <property type="term" value="P:presynaptic dense core vesicle exocytosis"/>
    <property type="evidence" value="ECO:0007669"/>
    <property type="project" value="Ensembl"/>
</dbReference>
<dbReference type="GO" id="GO:0070201">
    <property type="term" value="P:regulation of establishment of protein localization"/>
    <property type="evidence" value="ECO:0007669"/>
    <property type="project" value="Ensembl"/>
</dbReference>
<dbReference type="GO" id="GO:0010975">
    <property type="term" value="P:regulation of neuron projection development"/>
    <property type="evidence" value="ECO:0007669"/>
    <property type="project" value="Ensembl"/>
</dbReference>
<dbReference type="GO" id="GO:0031629">
    <property type="term" value="P:synaptic vesicle fusion to presynaptic active zone membrane"/>
    <property type="evidence" value="ECO:0000318"/>
    <property type="project" value="GO_Central"/>
</dbReference>
<dbReference type="GO" id="GO:0016082">
    <property type="term" value="P:synaptic vesicle priming"/>
    <property type="evidence" value="ECO:0000318"/>
    <property type="project" value="GO_Central"/>
</dbReference>
<dbReference type="CDD" id="cd15885">
    <property type="entry name" value="SNARE_SNAP25C"/>
    <property type="match status" value="1"/>
</dbReference>
<dbReference type="CDD" id="cd15894">
    <property type="entry name" value="SNARE_SNAP25N"/>
    <property type="match status" value="1"/>
</dbReference>
<dbReference type="FunFam" id="1.20.5.110:FF:000007">
    <property type="entry name" value="Synaptosomal-associated protein"/>
    <property type="match status" value="1"/>
</dbReference>
<dbReference type="FunFam" id="1.20.5.110:FF:000009">
    <property type="entry name" value="Synaptosomal-associated protein"/>
    <property type="match status" value="1"/>
</dbReference>
<dbReference type="Gene3D" id="1.20.5.110">
    <property type="match status" value="2"/>
</dbReference>
<dbReference type="InterPro" id="IPR000928">
    <property type="entry name" value="SNAP-25_dom"/>
</dbReference>
<dbReference type="InterPro" id="IPR039077">
    <property type="entry name" value="SNAP-25_N_SNARE_chord"/>
</dbReference>
<dbReference type="InterPro" id="IPR000727">
    <property type="entry name" value="T_SNARE_dom"/>
</dbReference>
<dbReference type="PANTHER" id="PTHR19305">
    <property type="entry name" value="SYNAPTOSOMAL ASSOCIATED PROTEIN"/>
    <property type="match status" value="1"/>
</dbReference>
<dbReference type="PANTHER" id="PTHR19305:SF5">
    <property type="entry name" value="SYNAPTOSOMAL-ASSOCIATED PROTEIN 25"/>
    <property type="match status" value="1"/>
</dbReference>
<dbReference type="Pfam" id="PF00835">
    <property type="entry name" value="SNAP-25"/>
    <property type="match status" value="1"/>
</dbReference>
<dbReference type="SMART" id="SM00397">
    <property type="entry name" value="t_SNARE"/>
    <property type="match status" value="2"/>
</dbReference>
<dbReference type="SUPFAM" id="SSF58038">
    <property type="entry name" value="SNARE fusion complex"/>
    <property type="match status" value="2"/>
</dbReference>
<dbReference type="PROSITE" id="PS50192">
    <property type="entry name" value="T_SNARE"/>
    <property type="match status" value="2"/>
</dbReference>
<organism>
    <name type="scientific">Pan troglodytes</name>
    <name type="common">Chimpanzee</name>
    <dbReference type="NCBI Taxonomy" id="9598"/>
    <lineage>
        <taxon>Eukaryota</taxon>
        <taxon>Metazoa</taxon>
        <taxon>Chordata</taxon>
        <taxon>Craniata</taxon>
        <taxon>Vertebrata</taxon>
        <taxon>Euteleostomi</taxon>
        <taxon>Mammalia</taxon>
        <taxon>Eutheria</taxon>
        <taxon>Euarchontoglires</taxon>
        <taxon>Primates</taxon>
        <taxon>Haplorrhini</taxon>
        <taxon>Catarrhini</taxon>
        <taxon>Hominidae</taxon>
        <taxon>Pan</taxon>
    </lineage>
</organism>
<accession>Q5R1X1</accession>
<evidence type="ECO:0000250" key="1"/>
<evidence type="ECO:0000250" key="2">
    <source>
        <dbReference type="UniProtKB" id="P60879"/>
    </source>
</evidence>
<evidence type="ECO:0000250" key="3">
    <source>
        <dbReference type="UniProtKB" id="P60880"/>
    </source>
</evidence>
<evidence type="ECO:0000250" key="4">
    <source>
        <dbReference type="UniProtKB" id="P60881"/>
    </source>
</evidence>
<evidence type="ECO:0000250" key="5">
    <source>
        <dbReference type="UniProtKB" id="Q17QQ3"/>
    </source>
</evidence>
<evidence type="ECO:0000255" key="6">
    <source>
        <dbReference type="PROSITE-ProRule" id="PRU00202"/>
    </source>
</evidence>
<evidence type="ECO:0000256" key="7">
    <source>
        <dbReference type="SAM" id="MobiDB-lite"/>
    </source>
</evidence>
<evidence type="ECO:0000305" key="8"/>
<gene>
    <name type="primary">SNAP25</name>
</gene>
<keyword id="KW-1003">Cell membrane</keyword>
<keyword id="KW-0175">Coiled coil</keyword>
<keyword id="KW-0963">Cytoplasm</keyword>
<keyword id="KW-0449">Lipoprotein</keyword>
<keyword id="KW-0472">Membrane</keyword>
<keyword id="KW-0564">Palmitate</keyword>
<keyword id="KW-0597">Phosphoprotein</keyword>
<keyword id="KW-1185">Reference proteome</keyword>
<keyword id="KW-0677">Repeat</keyword>
<keyword id="KW-0770">Synapse</keyword>
<keyword id="KW-0771">Synaptosome</keyword>
<protein>
    <recommendedName>
        <fullName>Synaptosomal-associated protein 25</fullName>
        <shortName>SNAP-25</shortName>
    </recommendedName>
    <alternativeName>
        <fullName>Synaptosomal-associated 25 kDa protein</fullName>
    </alternativeName>
</protein>
<name>SNP25_PANTR</name>